<comment type="function">
    <text evidence="1">Catalyzes the transfer of a methyl group from 5-methyltetrahydrofolate to homocysteine resulting in methionine formation.</text>
</comment>
<comment type="catalytic activity">
    <reaction evidence="1">
        <text>5-methyltetrahydropteroyltri-L-glutamate + L-homocysteine = tetrahydropteroyltri-L-glutamate + L-methionine</text>
        <dbReference type="Rhea" id="RHEA:21196"/>
        <dbReference type="ChEBI" id="CHEBI:57844"/>
        <dbReference type="ChEBI" id="CHEBI:58140"/>
        <dbReference type="ChEBI" id="CHEBI:58199"/>
        <dbReference type="ChEBI" id="CHEBI:58207"/>
        <dbReference type="EC" id="2.1.1.14"/>
    </reaction>
</comment>
<comment type="cofactor">
    <cofactor evidence="1">
        <name>Zn(2+)</name>
        <dbReference type="ChEBI" id="CHEBI:29105"/>
    </cofactor>
    <text evidence="1">Binds 1 zinc ion per subunit.</text>
</comment>
<comment type="pathway">
    <text evidence="1">Amino-acid biosynthesis; L-methionine biosynthesis via de novo pathway; L-methionine from L-homocysteine (MetE route): step 1/1.</text>
</comment>
<comment type="similarity">
    <text evidence="1">Belongs to the vitamin-B12 independent methionine synthase family.</text>
</comment>
<keyword id="KW-0028">Amino-acid biosynthesis</keyword>
<keyword id="KW-0479">Metal-binding</keyword>
<keyword id="KW-0486">Methionine biosynthesis</keyword>
<keyword id="KW-0489">Methyltransferase</keyword>
<keyword id="KW-1185">Reference proteome</keyword>
<keyword id="KW-0677">Repeat</keyword>
<keyword id="KW-0808">Transferase</keyword>
<keyword id="KW-0862">Zinc</keyword>
<dbReference type="EC" id="2.1.1.14" evidence="1"/>
<dbReference type="EMBL" id="BX248583">
    <property type="protein sequence ID" value="CAD83300.1"/>
    <property type="molecule type" value="Genomic_DNA"/>
</dbReference>
<dbReference type="SMR" id="Q7VRI8"/>
<dbReference type="STRING" id="203907.Bfl625"/>
<dbReference type="KEGG" id="bfl:Bfl625"/>
<dbReference type="eggNOG" id="COG0620">
    <property type="taxonomic scope" value="Bacteria"/>
</dbReference>
<dbReference type="HOGENOM" id="CLU_013175_0_0_6"/>
<dbReference type="OrthoDB" id="244285at2"/>
<dbReference type="UniPathway" id="UPA00051">
    <property type="reaction ID" value="UER00082"/>
</dbReference>
<dbReference type="Proteomes" id="UP000002192">
    <property type="component" value="Chromosome"/>
</dbReference>
<dbReference type="GO" id="GO:0003871">
    <property type="term" value="F:5-methyltetrahydropteroyltriglutamate-homocysteine S-methyltransferase activity"/>
    <property type="evidence" value="ECO:0007669"/>
    <property type="project" value="UniProtKB-UniRule"/>
</dbReference>
<dbReference type="GO" id="GO:0008270">
    <property type="term" value="F:zinc ion binding"/>
    <property type="evidence" value="ECO:0007669"/>
    <property type="project" value="InterPro"/>
</dbReference>
<dbReference type="GO" id="GO:0009086">
    <property type="term" value="P:methionine biosynthetic process"/>
    <property type="evidence" value="ECO:0007669"/>
    <property type="project" value="UniProtKB-UniRule"/>
</dbReference>
<dbReference type="GO" id="GO:0032259">
    <property type="term" value="P:methylation"/>
    <property type="evidence" value="ECO:0007669"/>
    <property type="project" value="UniProtKB-KW"/>
</dbReference>
<dbReference type="CDD" id="cd03311">
    <property type="entry name" value="CIMS_C_terminal_like"/>
    <property type="match status" value="1"/>
</dbReference>
<dbReference type="CDD" id="cd03312">
    <property type="entry name" value="CIMS_N_terminal_like"/>
    <property type="match status" value="1"/>
</dbReference>
<dbReference type="FunFam" id="3.20.20.210:FF:000003">
    <property type="entry name" value="5-methyltetrahydropteroyltriglutamate--homocysteine methyltransferase"/>
    <property type="match status" value="1"/>
</dbReference>
<dbReference type="Gene3D" id="3.20.20.210">
    <property type="match status" value="2"/>
</dbReference>
<dbReference type="HAMAP" id="MF_00172">
    <property type="entry name" value="Meth_synth"/>
    <property type="match status" value="1"/>
</dbReference>
<dbReference type="InterPro" id="IPR013215">
    <property type="entry name" value="Cbl-indep_Met_Synth_N"/>
</dbReference>
<dbReference type="InterPro" id="IPR006276">
    <property type="entry name" value="Cobalamin-indep_Met_synthase"/>
</dbReference>
<dbReference type="InterPro" id="IPR002629">
    <property type="entry name" value="Met_Synth_C/arc"/>
</dbReference>
<dbReference type="InterPro" id="IPR038071">
    <property type="entry name" value="UROD/MetE-like_sf"/>
</dbReference>
<dbReference type="NCBIfam" id="TIGR01371">
    <property type="entry name" value="met_syn_B12ind"/>
    <property type="match status" value="1"/>
</dbReference>
<dbReference type="NCBIfam" id="NF003556">
    <property type="entry name" value="PRK05222.1"/>
    <property type="match status" value="1"/>
</dbReference>
<dbReference type="PANTHER" id="PTHR30519">
    <property type="entry name" value="5-METHYLTETRAHYDROPTEROYLTRIGLUTAMATE--HOMOCYSTEINE METHYLTRANSFERASE"/>
    <property type="match status" value="1"/>
</dbReference>
<dbReference type="Pfam" id="PF08267">
    <property type="entry name" value="Meth_synt_1"/>
    <property type="match status" value="1"/>
</dbReference>
<dbReference type="Pfam" id="PF01717">
    <property type="entry name" value="Meth_synt_2"/>
    <property type="match status" value="1"/>
</dbReference>
<dbReference type="PIRSF" id="PIRSF000382">
    <property type="entry name" value="MeTrfase_B12_ind"/>
    <property type="match status" value="1"/>
</dbReference>
<dbReference type="SUPFAM" id="SSF51726">
    <property type="entry name" value="UROD/MetE-like"/>
    <property type="match status" value="2"/>
</dbReference>
<evidence type="ECO:0000255" key="1">
    <source>
        <dbReference type="HAMAP-Rule" id="MF_00172"/>
    </source>
</evidence>
<proteinExistence type="inferred from homology"/>
<sequence>MPVLSHILGFPRIGLYRELKHALEQYWEKKITENKLLDIGRMLRMRHWKQQINSGINLIPIGDFSWYDHVLDMSIMLNNIPTRFHILSQKKNTLNMLFSIARGDSINNTTITPSEMKKWFNTNYHYIVPEFVQNQIFKLNCTQLLAEIDEALSLNHPIKPVLLGPLTYLWIGKTKETKEFDRLSLLPSLLLVYKEIFNILSKKNIQWIQIDEPALVLELPQTWLKAYLHAYDQLYQTKIKLLLTTYFGKIYHQLPIIKQLKVNGLHIDLTNCSDNDISLLHEQLPKKWILSAGIINGKNIWKTNLYDWFLKLNTITHQRSLWIGSSCSLLHSPIDLNIESKLNNNIKNWFAFAIQKCSEIKLLCDALNSNHNDNSDQQNILKKYYNTNIQRLNSNIINNPQVQERCKNIITLDHSRKTKHITRMKLQHNRFNLPLYPTTTIGSFPQTSEIRKLRLKFKNKQINEDYYYTHIQQYIKKIIQEQEKLDLDILVHGEPERNDMVEYFGENLKGFVSSQHGWIQSYGSRCIKPPIIIGDISRPIPITIPWINYAQSLTNKPVKGILTGPITIMTWSFAREDIPRHMIALQLALAIRDEVMDLEKSGIGVIQIDEPALREGLPLKKSEQSYYLKWAINTFKITVSSVKDNTQIHTHMCYSEFNEIIDDILKLDVDVISIESSRSDLQLLQFIKTAGKKLNEIGPGIYDIHSIHQPSINEIMDKLKKLLQYIPKDRLWINPDCGLKTRSWNEIRESLNNMVIAAKTLRINNGLNN</sequence>
<name>METE_BLOFL</name>
<reference key="1">
    <citation type="journal article" date="2003" name="Proc. Natl. Acad. Sci. U.S.A.">
        <title>The genome sequence of Blochmannia floridanus: comparative analysis of reduced genomes.</title>
        <authorList>
            <person name="Gil R."/>
            <person name="Silva F.J."/>
            <person name="Zientz E."/>
            <person name="Delmotte F."/>
            <person name="Gonzalez-Candelas F."/>
            <person name="Latorre A."/>
            <person name="Rausell C."/>
            <person name="Kamerbeek J."/>
            <person name="Gadau J."/>
            <person name="Hoelldobler B."/>
            <person name="van Ham R.C.H.J."/>
            <person name="Gross R."/>
            <person name="Moya A."/>
        </authorList>
    </citation>
    <scope>NUCLEOTIDE SEQUENCE [LARGE SCALE GENOMIC DNA]</scope>
</reference>
<accession>Q7VRI8</accession>
<feature type="chain" id="PRO_0000098623" description="5-methyltetrahydropteroyltriglutamate--homocysteine methyltransferase">
    <location>
        <begin position="1"/>
        <end position="769"/>
    </location>
</feature>
<feature type="active site" description="Proton donor" evidence="1">
    <location>
        <position position="705"/>
    </location>
</feature>
<feature type="binding site" evidence="1">
    <location>
        <begin position="17"/>
        <end position="20"/>
    </location>
    <ligand>
        <name>5-methyltetrahydropteroyltri-L-glutamate</name>
        <dbReference type="ChEBI" id="CHEBI:58207"/>
    </ligand>
</feature>
<feature type="binding site" evidence="1">
    <location>
        <position position="118"/>
    </location>
    <ligand>
        <name>5-methyltetrahydropteroyltri-L-glutamate</name>
        <dbReference type="ChEBI" id="CHEBI:58207"/>
    </ligand>
</feature>
<feature type="binding site" evidence="1">
    <location>
        <begin position="441"/>
        <end position="443"/>
    </location>
    <ligand>
        <name>L-homocysteine</name>
        <dbReference type="ChEBI" id="CHEBI:58199"/>
    </ligand>
</feature>
<feature type="binding site" evidence="1">
    <location>
        <begin position="441"/>
        <end position="443"/>
    </location>
    <ligand>
        <name>L-methionine</name>
        <dbReference type="ChEBI" id="CHEBI:57844"/>
    </ligand>
</feature>
<feature type="binding site" evidence="1">
    <location>
        <position position="494"/>
    </location>
    <ligand>
        <name>L-homocysteine</name>
        <dbReference type="ChEBI" id="CHEBI:58199"/>
    </ligand>
</feature>
<feature type="binding site" evidence="1">
    <location>
        <position position="494"/>
    </location>
    <ligand>
        <name>L-methionine</name>
        <dbReference type="ChEBI" id="CHEBI:57844"/>
    </ligand>
</feature>
<feature type="binding site" evidence="1">
    <location>
        <begin position="525"/>
        <end position="526"/>
    </location>
    <ligand>
        <name>5-methyltetrahydropteroyltri-L-glutamate</name>
        <dbReference type="ChEBI" id="CHEBI:58207"/>
    </ligand>
</feature>
<feature type="binding site" evidence="1">
    <location>
        <position position="571"/>
    </location>
    <ligand>
        <name>5-methyltetrahydropteroyltri-L-glutamate</name>
        <dbReference type="ChEBI" id="CHEBI:58207"/>
    </ligand>
</feature>
<feature type="binding site" evidence="1">
    <location>
        <position position="609"/>
    </location>
    <ligand>
        <name>L-homocysteine</name>
        <dbReference type="ChEBI" id="CHEBI:58199"/>
    </ligand>
</feature>
<feature type="binding site" evidence="1">
    <location>
        <position position="609"/>
    </location>
    <ligand>
        <name>L-methionine</name>
        <dbReference type="ChEBI" id="CHEBI:57844"/>
    </ligand>
</feature>
<feature type="binding site" evidence="1">
    <location>
        <position position="615"/>
    </location>
    <ligand>
        <name>5-methyltetrahydropteroyltri-L-glutamate</name>
        <dbReference type="ChEBI" id="CHEBI:58207"/>
    </ligand>
</feature>
<feature type="binding site" evidence="1">
    <location>
        <position position="651"/>
    </location>
    <ligand>
        <name>Zn(2+)</name>
        <dbReference type="ChEBI" id="CHEBI:29105"/>
        <note>catalytic</note>
    </ligand>
</feature>
<feature type="binding site" evidence="1">
    <location>
        <position position="653"/>
    </location>
    <ligand>
        <name>Zn(2+)</name>
        <dbReference type="ChEBI" id="CHEBI:29105"/>
        <note>catalytic</note>
    </ligand>
</feature>
<feature type="binding site" evidence="1">
    <location>
        <position position="675"/>
    </location>
    <ligand>
        <name>Zn(2+)</name>
        <dbReference type="ChEBI" id="CHEBI:29105"/>
        <note>catalytic</note>
    </ligand>
</feature>
<feature type="binding site" evidence="1">
    <location>
        <position position="737"/>
    </location>
    <ligand>
        <name>Zn(2+)</name>
        <dbReference type="ChEBI" id="CHEBI:29105"/>
        <note>catalytic</note>
    </ligand>
</feature>
<organism>
    <name type="scientific">Blochmanniella floridana</name>
    <dbReference type="NCBI Taxonomy" id="203907"/>
    <lineage>
        <taxon>Bacteria</taxon>
        <taxon>Pseudomonadati</taxon>
        <taxon>Pseudomonadota</taxon>
        <taxon>Gammaproteobacteria</taxon>
        <taxon>Enterobacterales</taxon>
        <taxon>Enterobacteriaceae</taxon>
        <taxon>ant endosymbionts</taxon>
        <taxon>Candidatus Blochmanniella</taxon>
    </lineage>
</organism>
<protein>
    <recommendedName>
        <fullName evidence="1">5-methyltetrahydropteroyltriglutamate--homocysteine methyltransferase</fullName>
        <ecNumber evidence="1">2.1.1.14</ecNumber>
    </recommendedName>
    <alternativeName>
        <fullName evidence="1">Cobalamin-independent methionine synthase</fullName>
    </alternativeName>
    <alternativeName>
        <fullName evidence="1">Methionine synthase, vitamin-B12 independent isozyme</fullName>
    </alternativeName>
</protein>
<gene>
    <name evidence="1" type="primary">metE</name>
    <name type="ordered locus">Bfl625</name>
</gene>